<evidence type="ECO:0000250" key="1">
    <source>
        <dbReference type="UniProtKB" id="Q6XYB7"/>
    </source>
</evidence>
<evidence type="ECO:0000250" key="2">
    <source>
        <dbReference type="UniProtKB" id="Q804R0"/>
    </source>
</evidence>
<evidence type="ECO:0000255" key="3">
    <source>
        <dbReference type="PROSITE-ProRule" id="PRU00108"/>
    </source>
</evidence>
<evidence type="ECO:0000256" key="4">
    <source>
        <dbReference type="SAM" id="MobiDB-lite"/>
    </source>
</evidence>
<evidence type="ECO:0000269" key="5">
    <source>
    </source>
</evidence>
<evidence type="ECO:0000269" key="6">
    <source>
    </source>
</evidence>
<evidence type="ECO:0000269" key="7">
    <source>
    </source>
</evidence>
<evidence type="ECO:0000305" key="8"/>
<evidence type="ECO:0000312" key="9">
    <source>
        <dbReference type="MGI" id="MGI:1342288"/>
    </source>
</evidence>
<keyword id="KW-0238">DNA-binding</keyword>
<keyword id="KW-0371">Homeobox</keyword>
<keyword id="KW-0539">Nucleus</keyword>
<keyword id="KW-1185">Reference proteome</keyword>
<keyword id="KW-0804">Transcription</keyword>
<keyword id="KW-0805">Transcription regulation</keyword>
<protein>
    <recommendedName>
        <fullName>Transcription factor LBX2</fullName>
    </recommendedName>
    <alternativeName>
        <fullName evidence="1">Ladybird homeobox 2</fullName>
    </alternativeName>
    <alternativeName>
        <fullName>Ladybird homeobox protein homolog 2</fullName>
    </alternativeName>
</protein>
<organism>
    <name type="scientific">Mus musculus</name>
    <name type="common">Mouse</name>
    <dbReference type="NCBI Taxonomy" id="10090"/>
    <lineage>
        <taxon>Eukaryota</taxon>
        <taxon>Metazoa</taxon>
        <taxon>Chordata</taxon>
        <taxon>Craniata</taxon>
        <taxon>Vertebrata</taxon>
        <taxon>Euteleostomi</taxon>
        <taxon>Mammalia</taxon>
        <taxon>Eutheria</taxon>
        <taxon>Euarchontoglires</taxon>
        <taxon>Glires</taxon>
        <taxon>Rodentia</taxon>
        <taxon>Myomorpha</taxon>
        <taxon>Muroidea</taxon>
        <taxon>Muridae</taxon>
        <taxon>Murinae</taxon>
        <taxon>Mus</taxon>
        <taxon>Mus</taxon>
    </lineage>
</organism>
<reference key="1">
    <citation type="journal article" date="1999" name="Mech. Dev.">
        <title>Lbx2, a novel murine homeobox gene related to the Drosophila ladybird genes is expressed in the developing urogenital system, eye and brain.</title>
        <authorList>
            <person name="Chen F."/>
            <person name="Liu K.C."/>
            <person name="Epstein J.A."/>
        </authorList>
    </citation>
    <scope>NUCLEOTIDE SEQUENCE [MRNA]</scope>
    <scope>TISSUE SPECIFICITY</scope>
    <scope>DEVELOPMENTAL STAGE</scope>
</reference>
<reference key="2">
    <citation type="journal article" date="2005" name="Science">
        <title>The transcriptional landscape of the mammalian genome.</title>
        <authorList>
            <person name="Carninci P."/>
            <person name="Kasukawa T."/>
            <person name="Katayama S."/>
            <person name="Gough J."/>
            <person name="Frith M.C."/>
            <person name="Maeda N."/>
            <person name="Oyama R."/>
            <person name="Ravasi T."/>
            <person name="Lenhard B."/>
            <person name="Wells C."/>
            <person name="Kodzius R."/>
            <person name="Shimokawa K."/>
            <person name="Bajic V.B."/>
            <person name="Brenner S.E."/>
            <person name="Batalov S."/>
            <person name="Forrest A.R."/>
            <person name="Zavolan M."/>
            <person name="Davis M.J."/>
            <person name="Wilming L.G."/>
            <person name="Aidinis V."/>
            <person name="Allen J.E."/>
            <person name="Ambesi-Impiombato A."/>
            <person name="Apweiler R."/>
            <person name="Aturaliya R.N."/>
            <person name="Bailey T.L."/>
            <person name="Bansal M."/>
            <person name="Baxter L."/>
            <person name="Beisel K.W."/>
            <person name="Bersano T."/>
            <person name="Bono H."/>
            <person name="Chalk A.M."/>
            <person name="Chiu K.P."/>
            <person name="Choudhary V."/>
            <person name="Christoffels A."/>
            <person name="Clutterbuck D.R."/>
            <person name="Crowe M.L."/>
            <person name="Dalla E."/>
            <person name="Dalrymple B.P."/>
            <person name="de Bono B."/>
            <person name="Della Gatta G."/>
            <person name="di Bernardo D."/>
            <person name="Down T."/>
            <person name="Engstrom P."/>
            <person name="Fagiolini M."/>
            <person name="Faulkner G."/>
            <person name="Fletcher C.F."/>
            <person name="Fukushima T."/>
            <person name="Furuno M."/>
            <person name="Futaki S."/>
            <person name="Gariboldi M."/>
            <person name="Georgii-Hemming P."/>
            <person name="Gingeras T.R."/>
            <person name="Gojobori T."/>
            <person name="Green R.E."/>
            <person name="Gustincich S."/>
            <person name="Harbers M."/>
            <person name="Hayashi Y."/>
            <person name="Hensch T.K."/>
            <person name="Hirokawa N."/>
            <person name="Hill D."/>
            <person name="Huminiecki L."/>
            <person name="Iacono M."/>
            <person name="Ikeo K."/>
            <person name="Iwama A."/>
            <person name="Ishikawa T."/>
            <person name="Jakt M."/>
            <person name="Kanapin A."/>
            <person name="Katoh M."/>
            <person name="Kawasawa Y."/>
            <person name="Kelso J."/>
            <person name="Kitamura H."/>
            <person name="Kitano H."/>
            <person name="Kollias G."/>
            <person name="Krishnan S.P."/>
            <person name="Kruger A."/>
            <person name="Kummerfeld S.K."/>
            <person name="Kurochkin I.V."/>
            <person name="Lareau L.F."/>
            <person name="Lazarevic D."/>
            <person name="Lipovich L."/>
            <person name="Liu J."/>
            <person name="Liuni S."/>
            <person name="McWilliam S."/>
            <person name="Madan Babu M."/>
            <person name="Madera M."/>
            <person name="Marchionni L."/>
            <person name="Matsuda H."/>
            <person name="Matsuzawa S."/>
            <person name="Miki H."/>
            <person name="Mignone F."/>
            <person name="Miyake S."/>
            <person name="Morris K."/>
            <person name="Mottagui-Tabar S."/>
            <person name="Mulder N."/>
            <person name="Nakano N."/>
            <person name="Nakauchi H."/>
            <person name="Ng P."/>
            <person name="Nilsson R."/>
            <person name="Nishiguchi S."/>
            <person name="Nishikawa S."/>
            <person name="Nori F."/>
            <person name="Ohara O."/>
            <person name="Okazaki Y."/>
            <person name="Orlando V."/>
            <person name="Pang K.C."/>
            <person name="Pavan W.J."/>
            <person name="Pavesi G."/>
            <person name="Pesole G."/>
            <person name="Petrovsky N."/>
            <person name="Piazza S."/>
            <person name="Reed J."/>
            <person name="Reid J.F."/>
            <person name="Ring B.Z."/>
            <person name="Ringwald M."/>
            <person name="Rost B."/>
            <person name="Ruan Y."/>
            <person name="Salzberg S.L."/>
            <person name="Sandelin A."/>
            <person name="Schneider C."/>
            <person name="Schoenbach C."/>
            <person name="Sekiguchi K."/>
            <person name="Semple C.A."/>
            <person name="Seno S."/>
            <person name="Sessa L."/>
            <person name="Sheng Y."/>
            <person name="Shibata Y."/>
            <person name="Shimada H."/>
            <person name="Shimada K."/>
            <person name="Silva D."/>
            <person name="Sinclair B."/>
            <person name="Sperling S."/>
            <person name="Stupka E."/>
            <person name="Sugiura K."/>
            <person name="Sultana R."/>
            <person name="Takenaka Y."/>
            <person name="Taki K."/>
            <person name="Tammoja K."/>
            <person name="Tan S.L."/>
            <person name="Tang S."/>
            <person name="Taylor M.S."/>
            <person name="Tegner J."/>
            <person name="Teichmann S.A."/>
            <person name="Ueda H.R."/>
            <person name="van Nimwegen E."/>
            <person name="Verardo R."/>
            <person name="Wei C.L."/>
            <person name="Yagi K."/>
            <person name="Yamanishi H."/>
            <person name="Zabarovsky E."/>
            <person name="Zhu S."/>
            <person name="Zimmer A."/>
            <person name="Hide W."/>
            <person name="Bult C."/>
            <person name="Grimmond S.M."/>
            <person name="Teasdale R.D."/>
            <person name="Liu E.T."/>
            <person name="Brusic V."/>
            <person name="Quackenbush J."/>
            <person name="Wahlestedt C."/>
            <person name="Mattick J.S."/>
            <person name="Hume D.A."/>
            <person name="Kai C."/>
            <person name="Sasaki D."/>
            <person name="Tomaru Y."/>
            <person name="Fukuda S."/>
            <person name="Kanamori-Katayama M."/>
            <person name="Suzuki M."/>
            <person name="Aoki J."/>
            <person name="Arakawa T."/>
            <person name="Iida J."/>
            <person name="Imamura K."/>
            <person name="Itoh M."/>
            <person name="Kato T."/>
            <person name="Kawaji H."/>
            <person name="Kawagashira N."/>
            <person name="Kawashima T."/>
            <person name="Kojima M."/>
            <person name="Kondo S."/>
            <person name="Konno H."/>
            <person name="Nakano K."/>
            <person name="Ninomiya N."/>
            <person name="Nishio T."/>
            <person name="Okada M."/>
            <person name="Plessy C."/>
            <person name="Shibata K."/>
            <person name="Shiraki T."/>
            <person name="Suzuki S."/>
            <person name="Tagami M."/>
            <person name="Waki K."/>
            <person name="Watahiki A."/>
            <person name="Okamura-Oho Y."/>
            <person name="Suzuki H."/>
            <person name="Kawai J."/>
            <person name="Hayashizaki Y."/>
        </authorList>
    </citation>
    <scope>NUCLEOTIDE SEQUENCE [LARGE SCALE MRNA]</scope>
    <source>
        <strain>C57BL/6J</strain>
        <tissue>Kidney</tissue>
    </source>
</reference>
<reference key="3">
    <citation type="journal article" date="2004" name="Genome Res.">
        <title>The status, quality, and expansion of the NIH full-length cDNA project: the Mammalian Gene Collection (MGC).</title>
        <authorList>
            <consortium name="The MGC Project Team"/>
        </authorList>
    </citation>
    <scope>NUCLEOTIDE SEQUENCE [LARGE SCALE MRNA]</scope>
</reference>
<reference key="4">
    <citation type="journal article" date="2001" name="Genomics">
        <title>Characterization of the murine Lbx2 promoter, identification of the human homologue, and evaluation as a candidate for Alstrom syndrome.</title>
        <authorList>
            <person name="Chen F."/>
            <person name="Collin G.B."/>
            <person name="Liu K.C."/>
            <person name="Beier D.R."/>
            <person name="Eccles M."/>
            <person name="Nishina P.M."/>
            <person name="Moshang T."/>
            <person name="Epstein J.A."/>
        </authorList>
    </citation>
    <scope>DEVELOPMENTAL STAGE</scope>
</reference>
<reference key="5">
    <citation type="journal article" date="2007" name="Genesis">
        <title>Generation of mice deficient for Lbx2, a gene expressed in the urogenital system, nervous system, and Pax3 dependent tissues.</title>
        <authorList>
            <person name="Wei K."/>
            <person name="Chen J."/>
            <person name="Akrami K."/>
            <person name="Sekhon R."/>
            <person name="Chen F."/>
        </authorList>
    </citation>
    <scope>DISRUPTION PHENOTYPE</scope>
    <scope>INDUCTION</scope>
</reference>
<gene>
    <name type="primary">Lbx2</name>
    <name evidence="9" type="synonym">Lbx2h</name>
</gene>
<accession>Q9WUN8</accession>
<accession>Q32M12</accession>
<proteinExistence type="evidence at transcript level"/>
<comment type="function">
    <text evidence="2">Transcription factor.</text>
</comment>
<comment type="subcellular location">
    <subcellularLocation>
        <location evidence="3">Nucleus</location>
    </subcellularLocation>
</comment>
<comment type="tissue specificity">
    <text evidence="5">Expressed in the developing urogenital system, eye and brain.</text>
</comment>
<comment type="developmental stage">
    <text evidence="5 6">First detected at 10.5 dpc in the gonadal component of the urogenital ridge. Expression dramatically increases by 11.5 dpc in the urogenital ridges and in the cranial surface ectoderm. At this time, it is also expressed in the trigeminal ganglion and nodose ganglion. At later stages, it is expressed in the brain and organs derived from the urogenital ridge, including the gonadal tubercle, kidneys, and adrenal glands. From 14.5 dpc to birth, expression is evident in the developing retinal neuroepithelium and the vibrissa.</text>
</comment>
<comment type="induction">
    <text evidence="7">By PAX3 which regulates its expression.</text>
</comment>
<comment type="disruption phenotype">
    <text evidence="7">Mice are healthy and fertile and do not display any abnormal phenotype.</text>
</comment>
<feature type="chain" id="PRO_0000311329" description="Transcription factor LBX2">
    <location>
        <begin position="1"/>
        <end position="195"/>
    </location>
</feature>
<feature type="DNA-binding region" description="Homeobox" evidence="3">
    <location>
        <begin position="84"/>
        <end position="143"/>
    </location>
</feature>
<feature type="region of interest" description="Disordered" evidence="4">
    <location>
        <begin position="1"/>
        <end position="89"/>
    </location>
</feature>
<feature type="region of interest" description="Disordered" evidence="4">
    <location>
        <begin position="164"/>
        <end position="195"/>
    </location>
</feature>
<feature type="compositionally biased region" description="Acidic residues" evidence="4">
    <location>
        <begin position="186"/>
        <end position="195"/>
    </location>
</feature>
<feature type="sequence conflict" description="In Ref. 3; AAI09348." evidence="8" ref="3">
    <original>P</original>
    <variation>S</variation>
    <location>
        <position position="173"/>
    </location>
</feature>
<sequence length="195" mass="20917">MNSVHQRRTPFSIADILGPSMVPEAPSAPQLPEAGPDPASPLCALEELASKTFLGHSPRATPQPSEGRAAPEAPPGPGAGVRRRRKSRTAFTAQQVLELERRFVFQKYLAPSERDGLAARLGLANAQVVTWFQNRRAKLKRDVEEMRADVASLCGLSPGVLCYPALPDSTSSPDPGPSGPDSEPNLSDEEIQVDD</sequence>
<name>LBX2_MOUSE</name>
<dbReference type="EMBL" id="AF146150">
    <property type="protein sequence ID" value="AAD31905.1"/>
    <property type="molecule type" value="mRNA"/>
</dbReference>
<dbReference type="EMBL" id="AK002897">
    <property type="protein sequence ID" value="BAB22441.1"/>
    <property type="molecule type" value="mRNA"/>
</dbReference>
<dbReference type="EMBL" id="BC109347">
    <property type="protein sequence ID" value="AAI09348.1"/>
    <property type="molecule type" value="mRNA"/>
</dbReference>
<dbReference type="CCDS" id="CCDS20271.1"/>
<dbReference type="RefSeq" id="NP_034822.1">
    <property type="nucleotide sequence ID" value="NM_010692.4"/>
</dbReference>
<dbReference type="SMR" id="Q9WUN8"/>
<dbReference type="BioGRID" id="201118">
    <property type="interactions" value="1"/>
</dbReference>
<dbReference type="FunCoup" id="Q9WUN8">
    <property type="interactions" value="82"/>
</dbReference>
<dbReference type="STRING" id="10090.ENSMUSP00000047134"/>
<dbReference type="PaxDb" id="10090-ENSMUSP00000047134"/>
<dbReference type="Antibodypedia" id="31549">
    <property type="antibodies" value="116 antibodies from 15 providers"/>
</dbReference>
<dbReference type="DNASU" id="16815"/>
<dbReference type="Ensembl" id="ENSMUST00000041265.4">
    <property type="protein sequence ID" value="ENSMUSP00000047134.3"/>
    <property type="gene ID" value="ENSMUSG00000034968.4"/>
</dbReference>
<dbReference type="GeneID" id="16815"/>
<dbReference type="KEGG" id="mmu:16815"/>
<dbReference type="UCSC" id="uc009cmi.1">
    <property type="organism name" value="mouse"/>
</dbReference>
<dbReference type="AGR" id="MGI:1342288"/>
<dbReference type="CTD" id="85474"/>
<dbReference type="MGI" id="MGI:1342288">
    <property type="gene designation" value="Lbx2"/>
</dbReference>
<dbReference type="VEuPathDB" id="HostDB:ENSMUSG00000034968"/>
<dbReference type="eggNOG" id="KOG0488">
    <property type="taxonomic scope" value="Eukaryota"/>
</dbReference>
<dbReference type="GeneTree" id="ENSGT00940000162295"/>
<dbReference type="HOGENOM" id="CLU_086390_0_0_1"/>
<dbReference type="InParanoid" id="Q9WUN8"/>
<dbReference type="OMA" id="EVQCRLS"/>
<dbReference type="OrthoDB" id="6159439at2759"/>
<dbReference type="PhylomeDB" id="Q9WUN8"/>
<dbReference type="TreeFam" id="TF325047"/>
<dbReference type="BioGRID-ORCS" id="16815">
    <property type="hits" value="2 hits in 77 CRISPR screens"/>
</dbReference>
<dbReference type="PRO" id="PR:Q9WUN8"/>
<dbReference type="Proteomes" id="UP000000589">
    <property type="component" value="Chromosome 6"/>
</dbReference>
<dbReference type="RNAct" id="Q9WUN8">
    <property type="molecule type" value="protein"/>
</dbReference>
<dbReference type="Bgee" id="ENSMUSG00000034968">
    <property type="expression patterns" value="Expressed in female urethra and 51 other cell types or tissues"/>
</dbReference>
<dbReference type="GO" id="GO:0005634">
    <property type="term" value="C:nucleus"/>
    <property type="evidence" value="ECO:0007669"/>
    <property type="project" value="UniProtKB-SubCell"/>
</dbReference>
<dbReference type="GO" id="GO:1990837">
    <property type="term" value="F:sequence-specific double-stranded DNA binding"/>
    <property type="evidence" value="ECO:0007669"/>
    <property type="project" value="Ensembl"/>
</dbReference>
<dbReference type="GO" id="GO:0042692">
    <property type="term" value="P:muscle cell differentiation"/>
    <property type="evidence" value="ECO:0000250"/>
    <property type="project" value="UniProtKB"/>
</dbReference>
<dbReference type="GO" id="GO:1904105">
    <property type="term" value="P:positive regulation of convergent extension involved in gastrulation"/>
    <property type="evidence" value="ECO:0000250"/>
    <property type="project" value="UniProtKB"/>
</dbReference>
<dbReference type="GO" id="GO:2000052">
    <property type="term" value="P:positive regulation of non-canonical Wnt signaling pathway"/>
    <property type="evidence" value="ECO:0000250"/>
    <property type="project" value="UniProtKB"/>
</dbReference>
<dbReference type="CDD" id="cd00086">
    <property type="entry name" value="homeodomain"/>
    <property type="match status" value="1"/>
</dbReference>
<dbReference type="FunFam" id="1.10.10.60:FF:000507">
    <property type="entry name" value="transcription factor LBX2"/>
    <property type="match status" value="1"/>
</dbReference>
<dbReference type="Gene3D" id="1.10.10.60">
    <property type="entry name" value="Homeodomain-like"/>
    <property type="match status" value="1"/>
</dbReference>
<dbReference type="InterPro" id="IPR001356">
    <property type="entry name" value="HD"/>
</dbReference>
<dbReference type="InterPro" id="IPR009057">
    <property type="entry name" value="Homeodomain-like_sf"/>
</dbReference>
<dbReference type="InterPro" id="IPR000047">
    <property type="entry name" value="HTH_motif"/>
</dbReference>
<dbReference type="InterPro" id="IPR051892">
    <property type="entry name" value="LBX_TF"/>
</dbReference>
<dbReference type="PANTHER" id="PTHR24336">
    <property type="entry name" value="TRANSCRIPTION FACTOR LBX"/>
    <property type="match status" value="1"/>
</dbReference>
<dbReference type="PANTHER" id="PTHR24336:SF10">
    <property type="entry name" value="TRANSCRIPTION FACTOR LBX2"/>
    <property type="match status" value="1"/>
</dbReference>
<dbReference type="Pfam" id="PF00046">
    <property type="entry name" value="Homeodomain"/>
    <property type="match status" value="1"/>
</dbReference>
<dbReference type="PRINTS" id="PR00031">
    <property type="entry name" value="HTHREPRESSR"/>
</dbReference>
<dbReference type="SMART" id="SM00389">
    <property type="entry name" value="HOX"/>
    <property type="match status" value="1"/>
</dbReference>
<dbReference type="SUPFAM" id="SSF46689">
    <property type="entry name" value="Homeodomain-like"/>
    <property type="match status" value="1"/>
</dbReference>
<dbReference type="PROSITE" id="PS50071">
    <property type="entry name" value="HOMEOBOX_2"/>
    <property type="match status" value="1"/>
</dbReference>